<evidence type="ECO:0000255" key="1">
    <source>
        <dbReference type="HAMAP-Rule" id="MF_00272"/>
    </source>
</evidence>
<evidence type="ECO:0000255" key="2">
    <source>
        <dbReference type="PROSITE-ProRule" id="PRU01066"/>
    </source>
</evidence>
<protein>
    <recommendedName>
        <fullName evidence="1">Glycine cleavage system H protein</fullName>
    </recommendedName>
</protein>
<feature type="chain" id="PRO_0000302383" description="Glycine cleavage system H protein">
    <location>
        <begin position="1"/>
        <end position="130"/>
    </location>
</feature>
<feature type="domain" description="Lipoyl-binding" evidence="2">
    <location>
        <begin position="25"/>
        <end position="106"/>
    </location>
</feature>
<feature type="modified residue" description="N6-lipoyllysine" evidence="1">
    <location>
        <position position="66"/>
    </location>
</feature>
<proteinExistence type="inferred from homology"/>
<dbReference type="EMBL" id="CP000350">
    <property type="protein sequence ID" value="ABJ77142.1"/>
    <property type="molecule type" value="Genomic_DNA"/>
</dbReference>
<dbReference type="RefSeq" id="WP_002755329.1">
    <property type="nucleotide sequence ID" value="NC_008510.1"/>
</dbReference>
<dbReference type="SMR" id="Q04PM8"/>
<dbReference type="KEGG" id="lbj:LBJ_2731"/>
<dbReference type="HOGENOM" id="CLU_097408_2_2_12"/>
<dbReference type="Proteomes" id="UP000000656">
    <property type="component" value="Chromosome 1"/>
</dbReference>
<dbReference type="GO" id="GO:0005829">
    <property type="term" value="C:cytosol"/>
    <property type="evidence" value="ECO:0007669"/>
    <property type="project" value="TreeGrafter"/>
</dbReference>
<dbReference type="GO" id="GO:0005960">
    <property type="term" value="C:glycine cleavage complex"/>
    <property type="evidence" value="ECO:0007669"/>
    <property type="project" value="InterPro"/>
</dbReference>
<dbReference type="GO" id="GO:0019464">
    <property type="term" value="P:glycine decarboxylation via glycine cleavage system"/>
    <property type="evidence" value="ECO:0007669"/>
    <property type="project" value="UniProtKB-UniRule"/>
</dbReference>
<dbReference type="CDD" id="cd06848">
    <property type="entry name" value="GCS_H"/>
    <property type="match status" value="1"/>
</dbReference>
<dbReference type="Gene3D" id="2.40.50.100">
    <property type="match status" value="1"/>
</dbReference>
<dbReference type="HAMAP" id="MF_00272">
    <property type="entry name" value="GcvH"/>
    <property type="match status" value="1"/>
</dbReference>
<dbReference type="InterPro" id="IPR003016">
    <property type="entry name" value="2-oxoA_DH_lipoyl-BS"/>
</dbReference>
<dbReference type="InterPro" id="IPR000089">
    <property type="entry name" value="Biotin_lipoyl"/>
</dbReference>
<dbReference type="InterPro" id="IPR002930">
    <property type="entry name" value="GCV_H"/>
</dbReference>
<dbReference type="InterPro" id="IPR033753">
    <property type="entry name" value="GCV_H/Fam206"/>
</dbReference>
<dbReference type="InterPro" id="IPR017453">
    <property type="entry name" value="GCV_H_sub"/>
</dbReference>
<dbReference type="InterPro" id="IPR011053">
    <property type="entry name" value="Single_hybrid_motif"/>
</dbReference>
<dbReference type="NCBIfam" id="TIGR00527">
    <property type="entry name" value="gcvH"/>
    <property type="match status" value="1"/>
</dbReference>
<dbReference type="NCBIfam" id="NF002270">
    <property type="entry name" value="PRK01202.1"/>
    <property type="match status" value="1"/>
</dbReference>
<dbReference type="PANTHER" id="PTHR11715">
    <property type="entry name" value="GLYCINE CLEAVAGE SYSTEM H PROTEIN"/>
    <property type="match status" value="1"/>
</dbReference>
<dbReference type="PANTHER" id="PTHR11715:SF3">
    <property type="entry name" value="GLYCINE CLEAVAGE SYSTEM H PROTEIN-RELATED"/>
    <property type="match status" value="1"/>
</dbReference>
<dbReference type="Pfam" id="PF01597">
    <property type="entry name" value="GCV_H"/>
    <property type="match status" value="1"/>
</dbReference>
<dbReference type="SUPFAM" id="SSF51230">
    <property type="entry name" value="Single hybrid motif"/>
    <property type="match status" value="1"/>
</dbReference>
<dbReference type="PROSITE" id="PS50968">
    <property type="entry name" value="BIOTINYL_LIPOYL"/>
    <property type="match status" value="1"/>
</dbReference>
<dbReference type="PROSITE" id="PS00189">
    <property type="entry name" value="LIPOYL"/>
    <property type="match status" value="1"/>
</dbReference>
<organism>
    <name type="scientific">Leptospira borgpetersenii serovar Hardjo-bovis (strain JB197)</name>
    <dbReference type="NCBI Taxonomy" id="355277"/>
    <lineage>
        <taxon>Bacteria</taxon>
        <taxon>Pseudomonadati</taxon>
        <taxon>Spirochaetota</taxon>
        <taxon>Spirochaetia</taxon>
        <taxon>Leptospirales</taxon>
        <taxon>Leptospiraceae</taxon>
        <taxon>Leptospira</taxon>
    </lineage>
</organism>
<sequence length="130" mass="14074">MAETQAPAGYLFSEKHEWVKVEGDTALIGISDFAQSALGDIVFVDLPKSGKTVKQFETFGTIESVKAAEDLYAPVGGEVIESNSALSKNPGDVNSKPFDSWMIKVKGFSTSELEKLLSPEKYKALVAKLE</sequence>
<gene>
    <name evidence="1" type="primary">gcvH</name>
    <name type="ordered locus">LBJ_2731</name>
</gene>
<name>GCSH_LEPBJ</name>
<accession>Q04PM8</accession>
<keyword id="KW-0450">Lipoyl</keyword>
<comment type="function">
    <text evidence="1">The glycine cleavage system catalyzes the degradation of glycine. The H protein shuttles the methylamine group of glycine from the P protein to the T protein.</text>
</comment>
<comment type="cofactor">
    <cofactor evidence="1">
        <name>(R)-lipoate</name>
        <dbReference type="ChEBI" id="CHEBI:83088"/>
    </cofactor>
    <text evidence="1">Binds 1 lipoyl cofactor covalently.</text>
</comment>
<comment type="subunit">
    <text evidence="1">The glycine cleavage system is composed of four proteins: P, T, L and H.</text>
</comment>
<comment type="similarity">
    <text evidence="1">Belongs to the GcvH family.</text>
</comment>
<reference key="1">
    <citation type="journal article" date="2006" name="Proc. Natl. Acad. Sci. U.S.A.">
        <title>Genome reduction in Leptospira borgpetersenii reflects limited transmission potential.</title>
        <authorList>
            <person name="Bulach D.M."/>
            <person name="Zuerner R.L."/>
            <person name="Wilson P."/>
            <person name="Seemann T."/>
            <person name="McGrath A."/>
            <person name="Cullen P.A."/>
            <person name="Davis J."/>
            <person name="Johnson M."/>
            <person name="Kuczek E."/>
            <person name="Alt D.P."/>
            <person name="Peterson-Burch B."/>
            <person name="Coppel R.L."/>
            <person name="Rood J.I."/>
            <person name="Davies J.K."/>
            <person name="Adler B."/>
        </authorList>
    </citation>
    <scope>NUCLEOTIDE SEQUENCE [LARGE SCALE GENOMIC DNA]</scope>
    <source>
        <strain>JB197</strain>
    </source>
</reference>